<organism>
    <name type="scientific">Plasmodium falciparum (isolate 3D7)</name>
    <dbReference type="NCBI Taxonomy" id="36329"/>
    <lineage>
        <taxon>Eukaryota</taxon>
        <taxon>Sar</taxon>
        <taxon>Alveolata</taxon>
        <taxon>Apicomplexa</taxon>
        <taxon>Aconoidasida</taxon>
        <taxon>Haemosporida</taxon>
        <taxon>Plasmodiidae</taxon>
        <taxon>Plasmodium</taxon>
        <taxon>Plasmodium (Laverania)</taxon>
    </lineage>
</organism>
<accession>C6KTD2</accession>
<reference key="1">
    <citation type="journal article" date="2002" name="Nature">
        <title>Genome sequence of the human malaria parasite Plasmodium falciparum.</title>
        <authorList>
            <person name="Gardner M.J."/>
            <person name="Hall N."/>
            <person name="Fung E."/>
            <person name="White O."/>
            <person name="Berriman M."/>
            <person name="Hyman R.W."/>
            <person name="Carlton J.M."/>
            <person name="Pain A."/>
            <person name="Nelson K.E."/>
            <person name="Bowman S."/>
            <person name="Paulsen I.T."/>
            <person name="James K.D."/>
            <person name="Eisen J.A."/>
            <person name="Rutherford K.M."/>
            <person name="Salzberg S.L."/>
            <person name="Craig A."/>
            <person name="Kyes S."/>
            <person name="Chan M.-S."/>
            <person name="Nene V."/>
            <person name="Shallom S.J."/>
            <person name="Suh B."/>
            <person name="Peterson J."/>
            <person name="Angiuoli S."/>
            <person name="Pertea M."/>
            <person name="Allen J."/>
            <person name="Selengut J."/>
            <person name="Haft D."/>
            <person name="Mather M.W."/>
            <person name="Vaidya A.B."/>
            <person name="Martin D.M.A."/>
            <person name="Fairlamb A.H."/>
            <person name="Fraunholz M.J."/>
            <person name="Roos D.S."/>
            <person name="Ralph S.A."/>
            <person name="McFadden G.I."/>
            <person name="Cummings L.M."/>
            <person name="Subramanian G.M."/>
            <person name="Mungall C."/>
            <person name="Venter J.C."/>
            <person name="Carucci D.J."/>
            <person name="Hoffman S.L."/>
            <person name="Newbold C."/>
            <person name="Davis R.W."/>
            <person name="Fraser C.M."/>
            <person name="Barrell B.G."/>
        </authorList>
    </citation>
    <scope>NUCLEOTIDE SEQUENCE [LARGE SCALE GENOMIC DNA]</scope>
    <source>
        <strain>3D7</strain>
    </source>
</reference>
<reference evidence="12" key="2">
    <citation type="journal article" date="2002" name="Nature">
        <title>Sequence of Plasmodium falciparum chromosomes 1, 3-9 and 13.</title>
        <authorList>
            <person name="Hall N."/>
            <person name="Pain A."/>
            <person name="Berriman M."/>
            <person name="Churcher C.M."/>
            <person name="Harris B."/>
            <person name="Harris D."/>
            <person name="Mungall K.L."/>
            <person name="Bowman S."/>
            <person name="Atkin R."/>
            <person name="Baker S."/>
            <person name="Barron A."/>
            <person name="Brooks K."/>
            <person name="Buckee C.O."/>
            <person name="Burrows C."/>
            <person name="Cherevach I."/>
            <person name="Chillingworth C."/>
            <person name="Chillingworth T."/>
            <person name="Christodoulou Z."/>
            <person name="Clark L."/>
            <person name="Clark R."/>
            <person name="Corton C."/>
            <person name="Cronin A."/>
            <person name="Davies R.M."/>
            <person name="Davis P."/>
            <person name="Dear P."/>
            <person name="Dearden F."/>
            <person name="Doggett J."/>
            <person name="Feltwell T."/>
            <person name="Goble A."/>
            <person name="Goodhead I."/>
            <person name="Gwilliam R."/>
            <person name="Hamlin N."/>
            <person name="Hance Z."/>
            <person name="Harper D."/>
            <person name="Hauser H."/>
            <person name="Hornsby T."/>
            <person name="Holroyd S."/>
            <person name="Horrocks P."/>
            <person name="Humphray S."/>
            <person name="Jagels K."/>
            <person name="James K.D."/>
            <person name="Johnson D."/>
            <person name="Kerhornou A."/>
            <person name="Knights A."/>
            <person name="Konfortov B."/>
            <person name="Kyes S."/>
            <person name="Larke N."/>
            <person name="Lawson D."/>
            <person name="Lennard N."/>
            <person name="Line A."/>
            <person name="Maddison M."/>
            <person name="Mclean J."/>
            <person name="Mooney P."/>
            <person name="Moule S."/>
            <person name="Murphy L."/>
            <person name="Oliver K."/>
            <person name="Ormond D."/>
            <person name="Price C."/>
            <person name="Quail M.A."/>
            <person name="Rabbinowitsch E."/>
            <person name="Rajandream M.A."/>
            <person name="Rutter S."/>
            <person name="Rutherford K.M."/>
            <person name="Sanders M."/>
            <person name="Simmonds M."/>
            <person name="Seeger K."/>
            <person name="Sharp S."/>
            <person name="Smith R."/>
            <person name="Squares R."/>
            <person name="Squares S."/>
            <person name="Stevens K."/>
            <person name="Taylor K."/>
            <person name="Tivey A."/>
            <person name="Unwin L."/>
            <person name="Whitehead S."/>
            <person name="Woodward J.R."/>
            <person name="Sulston J.E."/>
            <person name="Craig A."/>
            <person name="Newbold C."/>
            <person name="Barrell B.G."/>
        </authorList>
    </citation>
    <scope>NUCLEOTIDE SEQUENCE [LARGE SCALE GENOMIC DNA]</scope>
    <source>
        <strain>3D7</strain>
    </source>
</reference>
<reference evidence="11" key="3">
    <citation type="journal article" date="2007" name="PLoS ONE">
        <title>Rapid identification of malaria vaccine candidates based on alpha-helical coiled coil protein motif.</title>
        <authorList>
            <person name="Villard V."/>
            <person name="Agak G.W."/>
            <person name="Frank G."/>
            <person name="Jafarshad A."/>
            <person name="Servis C."/>
            <person name="Nebie I."/>
            <person name="Sirima S.B."/>
            <person name="Felger I."/>
            <person name="Arevalo-Herrera M."/>
            <person name="Herrera S."/>
            <person name="Heitz F."/>
            <person name="Baecker V."/>
            <person name="Druilhe P."/>
            <person name="Kajava A.V."/>
            <person name="Corradin G."/>
        </authorList>
    </citation>
    <scope>SYNTHESIS OF 3412-3441</scope>
    <scope>POSSIBLE CANDIDATE MALARIA EPITOPE</scope>
</reference>
<reference key="4">
    <citation type="journal article" date="2008" name="Int. J. Parasitol.">
        <title>Histone lysine methyltransferases and demethylases in Plasmodium falciparum.</title>
        <authorList>
            <person name="Cui L."/>
            <person name="Fan Q."/>
            <person name="Cui L."/>
            <person name="Miao J."/>
        </authorList>
    </citation>
    <scope>DEVELOPMENTAL STAGE</scope>
</reference>
<gene>
    <name type="primary">SET1</name>
    <name type="ORF">PFF1440w</name>
</gene>
<dbReference type="EC" id="2.1.1.-"/>
<dbReference type="EMBL" id="AL844505">
    <property type="protein sequence ID" value="CAG25109.2"/>
    <property type="molecule type" value="Genomic_DNA"/>
</dbReference>
<dbReference type="RefSeq" id="XP_966279.2">
    <property type="nucleotide sequence ID" value="XM_961186.2"/>
</dbReference>
<dbReference type="SMR" id="C6KTD2"/>
<dbReference type="BioGRID" id="1210423">
    <property type="interactions" value="12"/>
</dbReference>
<dbReference type="FunCoup" id="C6KTD2">
    <property type="interactions" value="681"/>
</dbReference>
<dbReference type="STRING" id="36329.C6KTD2"/>
<dbReference type="PaxDb" id="5833-PFF1440w"/>
<dbReference type="EnsemblProtists" id="CAG25109">
    <property type="protein sequence ID" value="CAG25109"/>
    <property type="gene ID" value="PF3D7_0629700"/>
</dbReference>
<dbReference type="KEGG" id="pfa:PF3D7_0629700"/>
<dbReference type="VEuPathDB" id="PlasmoDB:PF3D7_0629700"/>
<dbReference type="HOGENOM" id="CLU_222997_0_0_1"/>
<dbReference type="InParanoid" id="C6KTD2"/>
<dbReference type="OMA" id="CCESIYN"/>
<dbReference type="OrthoDB" id="308383at2759"/>
<dbReference type="Proteomes" id="UP000001450">
    <property type="component" value="Chromosome 6"/>
</dbReference>
<dbReference type="GO" id="GO:0035097">
    <property type="term" value="C:histone methyltransferase complex"/>
    <property type="evidence" value="ECO:0000318"/>
    <property type="project" value="GO_Central"/>
</dbReference>
<dbReference type="GO" id="GO:0042800">
    <property type="term" value="F:histone H3K4 methyltransferase activity"/>
    <property type="evidence" value="ECO:0000318"/>
    <property type="project" value="GO_Central"/>
</dbReference>
<dbReference type="GO" id="GO:0019904">
    <property type="term" value="F:protein domain specific binding"/>
    <property type="evidence" value="ECO:0000250"/>
    <property type="project" value="GeneDB"/>
</dbReference>
<dbReference type="GO" id="GO:0008270">
    <property type="term" value="F:zinc ion binding"/>
    <property type="evidence" value="ECO:0007669"/>
    <property type="project" value="UniProtKB-KW"/>
</dbReference>
<dbReference type="GO" id="GO:0032259">
    <property type="term" value="P:methylation"/>
    <property type="evidence" value="ECO:0007669"/>
    <property type="project" value="UniProtKB-KW"/>
</dbReference>
<dbReference type="GO" id="GO:0045893">
    <property type="term" value="P:positive regulation of DNA-templated transcription"/>
    <property type="evidence" value="ECO:0000318"/>
    <property type="project" value="GO_Central"/>
</dbReference>
<dbReference type="CDD" id="cd04369">
    <property type="entry name" value="Bromodomain"/>
    <property type="match status" value="1"/>
</dbReference>
<dbReference type="CDD" id="cd15615">
    <property type="entry name" value="PHD_ARID4_like"/>
    <property type="match status" value="1"/>
</dbReference>
<dbReference type="CDD" id="cd10518">
    <property type="entry name" value="SET_SETD1-like"/>
    <property type="match status" value="1"/>
</dbReference>
<dbReference type="Gene3D" id="3.30.40.10">
    <property type="entry name" value="Zinc/RING finger domain, C3HC4 (zinc finger)"/>
    <property type="match status" value="2"/>
</dbReference>
<dbReference type="InterPro" id="IPR001487">
    <property type="entry name" value="Bromodomain"/>
</dbReference>
<dbReference type="InterPro" id="IPR036427">
    <property type="entry name" value="Bromodomain-like_sf"/>
</dbReference>
<dbReference type="InterPro" id="IPR034732">
    <property type="entry name" value="EPHD"/>
</dbReference>
<dbReference type="InterPro" id="IPR003616">
    <property type="entry name" value="Post-SET_dom"/>
</dbReference>
<dbReference type="InterPro" id="IPR001214">
    <property type="entry name" value="SET_dom"/>
</dbReference>
<dbReference type="InterPro" id="IPR046341">
    <property type="entry name" value="SET_dom_sf"/>
</dbReference>
<dbReference type="InterPro" id="IPR011011">
    <property type="entry name" value="Znf_FYVE_PHD"/>
</dbReference>
<dbReference type="InterPro" id="IPR001965">
    <property type="entry name" value="Znf_PHD"/>
</dbReference>
<dbReference type="InterPro" id="IPR019787">
    <property type="entry name" value="Znf_PHD-finger"/>
</dbReference>
<dbReference type="InterPro" id="IPR013083">
    <property type="entry name" value="Znf_RING/FYVE/PHD"/>
</dbReference>
<dbReference type="PANTHER" id="PTHR45838:SF4">
    <property type="entry name" value="HISTONE-LYSINE N-METHYLTRANSFERASE TRITHORAX"/>
    <property type="match status" value="1"/>
</dbReference>
<dbReference type="PANTHER" id="PTHR45838">
    <property type="entry name" value="HISTONE-LYSINE-N-METHYLTRANSFERASE 2 KMT2 FAMILY MEMBER"/>
    <property type="match status" value="1"/>
</dbReference>
<dbReference type="Pfam" id="PF00856">
    <property type="entry name" value="SET"/>
    <property type="match status" value="1"/>
</dbReference>
<dbReference type="SMART" id="SM00297">
    <property type="entry name" value="BROMO"/>
    <property type="match status" value="1"/>
</dbReference>
<dbReference type="SMART" id="SM00249">
    <property type="entry name" value="PHD"/>
    <property type="match status" value="4"/>
</dbReference>
<dbReference type="SMART" id="SM00317">
    <property type="entry name" value="SET"/>
    <property type="match status" value="1"/>
</dbReference>
<dbReference type="SUPFAM" id="SSF47370">
    <property type="entry name" value="Bromodomain"/>
    <property type="match status" value="1"/>
</dbReference>
<dbReference type="SUPFAM" id="SSF57903">
    <property type="entry name" value="FYVE/PHD zinc finger"/>
    <property type="match status" value="1"/>
</dbReference>
<dbReference type="SUPFAM" id="SSF82199">
    <property type="entry name" value="SET domain"/>
    <property type="match status" value="1"/>
</dbReference>
<dbReference type="PROSITE" id="PS50014">
    <property type="entry name" value="BROMODOMAIN_2"/>
    <property type="match status" value="1"/>
</dbReference>
<dbReference type="PROSITE" id="PS51805">
    <property type="entry name" value="EPHD"/>
    <property type="match status" value="1"/>
</dbReference>
<dbReference type="PROSITE" id="PS50868">
    <property type="entry name" value="POST_SET"/>
    <property type="match status" value="1"/>
</dbReference>
<dbReference type="PROSITE" id="PS50280">
    <property type="entry name" value="SET"/>
    <property type="match status" value="1"/>
</dbReference>
<dbReference type="PROSITE" id="PS01359">
    <property type="entry name" value="ZF_PHD_1"/>
    <property type="match status" value="1"/>
</dbReference>
<dbReference type="PROSITE" id="PS50016">
    <property type="entry name" value="ZF_PHD_2"/>
    <property type="match status" value="1"/>
</dbReference>
<sequence>MSENSDEGKMQKGKGNEMNEDKIICKKEESNSSSYKFISFIKTIEDVKEKWKSSNLSRMDVLKLKNDDINNDDNMNNMDNMNNMNNMNNINNMNNMNNINNMNNMNNINNMNNMNNMNNMDNMNNNEKHPCSNNNYSFNNYIKESINYNTCTGYDKNNIMLNFLDKHKKSIFLKSRNNVNTFQSDINSSKTSSFFSCMSLKNMNYHNDINKYSNYRMMKNINGLHKLMILKNKNKDKKLFTNTSDKKNYYCLNNGDHIINEKDSFSDTYISYGCRKRRWKKKKKNIYNMLFYDESINDYPYKNLEKTTFSNSSKIYELFFNKYKKKKILNIECSGNKYKGLLRTNHFPPYANFNFTIRRKLQTSNVLGHFMISKCNFNRTICYRKYIKCVNKYKNNKRNRVINMYVKKENVDSIKGTFGNMNNGVHHNNSRRRLNNTSKNNISNNNNNMLKKKKGKKNYKGSFDQMIQEDTTLDQAKKESIKTVSKNERKNNMNKHSHDNKVSKLNKRMSNKRRNNKNCNPSNDMCNEDDVIEKICTTEEVNDDEKKKKLSRHKKFVCERKKGVILQNNNKCKKKNDDNIINNNNDDVNNCGDNINDHHDNRKDYDTTEDQNKCPKILSINFIKCDEKLFEKIYNDMFLRIGKIVTNKRKKYFLIYKIVKDSFFRILILNTEKLEKNILQVMAVQDVILCDKNVKIYSDPIYIRNNNKLYAIKFLKIFSLKYMKKVKNMSEVNFSDDDECKKENKDNISESSKRSNNIGEKKMLHVEKSEEHDDMTSDSNKEDTKIEEGRKKSNEVNIDVDDGEEEENVNNNDNNNDNNNDNDNSSDNNNNDDGSNDTESCSKINKSKYKGKEKKDVKENTDDKNLSDSNSNNSKKKFKVLNKAIKKDNDKKKKYEKKNIEGNSNNNMILVRSNSSSTSTSNSSSKSKSSNCRNKKNNQISICSKMDEKNSEQKKKNIKKKNKTCNEGKSKKDSTKLNCVKKVKNKSTDKKNGKSKINIKNEKKKKINNSKINKGRKGINKKDKGKGDDNNYVCLIYDDEKKFYFNFKKFKDIINVIKGSDESTRFYVDTNNNNHNNNMKKKMKLFKKVEKSLYLENLDIDTDEILFRRPKFFNCIIEESFENYDINYEGEDGNFYVFKNKLNKIRKKVTIKNETDSSDMYIELKDEEKGFKYIGYRVSFELKKDNKKKAQVKVGIIKYYSPKYKQFFIHHLENYKLYQTSDLSKGNNNNNNNNMKENGFVKCGRNSYSRACSKSLNSSIYINKYKNVELNEKITNIIDDDNNNNINSSCIYKNNLSNENNLCADKVLCDGNYNMLENDVDEMNNVDQNQKKRNDLVFSDVKGWYSPYFYNIKILNNYKEFERFDILEKCDKKKEMTDHVNNTLNKNEICSICSKRILFMKGHDHYSCSLSSAIYDMCSEAEKKEIDENNCIDIYWGIKCFTCEKKYHANCLEDDVLITKWFDKNILMKEYKKFIYKNSLKKEKRYFNNNGKNKRTKNGKKKKNTIHKLEDKNNSHVVSTASNSHSIEVSSSESAKKGNEKNTATCKKRKTSCSALYKKVKKGKNKNGENKNGENKNGDIKNDDIKNDDIKNDDIRNDDDKNDENEENTKECKNESNNIDNNNSSNDSLSDVDNNKDNGKSKNKKYRRCINYIPSVEHSDITYKKFICKDCYRCIYCCESIYDYKQTPNVANYVICKNCNMVAHGSCCFPNVPDIYLFNWKCDDCLKCNKCNYSNLCYINYNEWELHLDCCINCYKEYEKKNFCIMCNEKYDEDDSKKWVQCDVCKFWIHLSCDKNESRNIETLSNKNIDYKCPTCSIGTFHDKIERILYLLFLLDKYKNFTFHVPINYSIYWRIVKIPMNLYIMKKKIWEKKYDTILDFLYDFMLIIHNAKMVHMPNTPIYKNACIFEKKGRVIIKNMFNMTNEYLNKCIEDCVENYKNEINNLDSFQIGHDNNNNNDNNINNNNKMEGVNNESVIFMNDGCNNKLYNKEGTNMTCVNMDSINKNLNDMNNNNNNNNKMEVFCGQNNIKLNEYYINKEGYNIISNDNNMNYDNYNNVQNIGMKKMYTNINDYNSSNVPNESVYNKENFINNSSIYNINENNTYDLNCDKKLIFDNKYNLSAYQNEGDIMNYNGMYQKNINISNPPYNNNNNNNNNMVKEGEKYILNNDDMNNISISKDNDINNNCNNIANIYRKRKLEQYKKDITQYELYELFDFKNDSFFINRNKEMFSCSSNDHNLIDYNILYVKLNGKIYFNTFYDKHDEFDVCKILKVHFLKNNRRGGGNHIMCPKIRNNQNLKEDVTQCDEEKIEQNNDNGCDDEYDNNNNNNNNIGSSSISSINKIHMNDTYNNSINDNSLRHNNNCSVFINSNIFMIDVLNEKVKINNIVKETKRIISPINNVLKFLKCIQIVFFYDNNTNECTEKEKNVISSNLCNNNFEKYVNINSIDHNNMSGEKKRKSVEEIMSVVDNKSYYGFNKCSEYILYSSNEYDRAKKKENKRIKLLKNDILKECCYICGSIEYKNNFIYCCICGISVHYSCANIVHPFLFNLNDYKDHKKEINNILNIITRNFKCDNCIKCDNCLLHFDSSLKHNLYFKLKNLNVSCNNNRMERRTYNYLYDVKIKVFTTNKEGTKQTGKCVMKTKENDIIKLDEDNKQKDELNEANKECFYKQDDVHVEKNCDELLYKNSFNSEECNKNEKKKNDNNVDENDDNVDKNDDNNNNNNNGDDNNNIDNTLVDGDMNKLENDLNNSNDFSINEEKKNNKDTKKYMISSKEEINKEIENVSNQMDNKNNDVDKKKNISNEEIILDNTKNSCHDNDSNVLYNESVKKSFNACKIEKKEGIEKDDNLGHVNKLRNKRLIKILSIREEGNKLVKCFCCGKPSHDECFYIIDNNTYKNKICTLKKTVKNYVRKKNVENKCNTKVEMNSDVILLDDNIKDHCSVNKTGDEHMNNNEFIDISKDKISEHNILDESFNSGVVCSDKNRKDQVVFIDGDVKNNDISIIEENVTYYTSKEVNNNSVLKNERDVESTSELYIGGDKHVYNKLETDNAEMESNNNNNNNNNNSDCNNNVSTLSTAAVNTINRSHMSPQKNDNDMNKINQDDIIHTKMNDKKNVKDDNGNMTNLNNNIDKNDRNLDTILKEHSVIMQKLDELKENRNKEHDGEFYNNLILNNQFLIHSFKVEEGVEINKDSIIINKKMFNKYILNKIYELLDNKKRVRIKDLFNLFNLDEFRCSFILYEVLNALNTYLNEKLKEYNLTKIRNGTYKKYENEIRNENFCLFNKYLIVNNRDKINITKVVLKIQSLITEILSDAMNGNIVDEKDKSKKKESISSDFNVVNNVKEYNIQNGCINIDINNYFKGEYINFKPILCSSQFNLDTNAQIFLQNKANLSMFQKSASYNNNFENNLENNFVNNKMNNMNNMKNNMNNMNNIMNNIMNNNMNNIMNNIMNNNMNNIINNNNIFNNDVSNNVDMQHKSDQICIFNSNNIHSVPIFNNKPYMDNNFNNMVLVNKSNDINGDDILCNMKNLYNKSVCNKQEKNGYSVVHKNICDVNFPYNDTKIWNGDITNKSKTYTYTNINNNGSVIDYRKWSSVNRSVSMNNMNCIRSNTNPRILSGTDHILKNNHMNKRNNVNNTYGVNNVNNVNNVNNTNNVSCFMMRRKIRSNSLHDMNDKMNKMNDNINININNLNIINNNINICNMNYPIDRVDSMNNTFNRNNIIISQNTKENTNILNFNGNDFCNNNNNNNNIINKENNFGTSNFNSPFHVGNLAKSYSYNNTMSEKNMNEVICPNVRNNMSNMNNMNNMNNMNNMNNMNNMNNMNNMDSINNVISYSCTNPNMKDINFNSMRRSSSTPKKSTGLLKNYFNIDIDQYNKTNSHIMNYNVSINNDMNNVYINNNNNHNNNNNNSCNNFINNDVINMNNVGTFYNFNQNAESYNNISNNIKCSNINNIIINNNMNVNNLNYFCNNKEVGFKENDLNINQKVHTINKDPYEMNHSKMYVTFPYCNTKDNNSNKSSLKSNVLRLDKIRNRNIKKPLLYNRSSSMHSSDNLIYNVHNNNRNSPAEFTSDIIINKERNMENNYNTSINYVNNNITNNIIVANNNCYHTANNFIQINYSPSSSNIVNINKDSYKYDISLENCIDLGSTNTCMYNLNNIHNKDINNMPLEDCFSHIGSCPNEQNEHEDEINEDNKKDVTKQQKKRKLNSVSKKDMLIKKEMNADDNINCKENTLQNESPKKDDELRENDLKTTTENIKSNEVEDKEFVDKKKKRKLSVKVKVNVNVKVELQDTENDENKEKGIKKEKNDEEKKNDAEKKKKENKKGREKSVKVRKTKNQTQVERENEKENLMENVTNDKTSDIINNKTSDIINNKTSDIINNKTSDIINNKTSDIINNKTSDIINNKTSDIINDKTNDIINNKTSDCLSLVQNNKPVIHIDCNTSLDITDGYNNLISCEGRKKGKYNIEENNINDDNMFQYSDAFDSEGSIKYKEEYDKIYIPNNKNKINNINNFLIKNNLLLKSKFMRITPNTYLCRNCVLLYQNDFSYNTYEEEINKMERSILNEYEKGVIKKNEYVHDAIQNDKVVNTDENIMTNVLADKVDDMKIVEKLNCPLNVEEKGIEENILYVKREGDELINYGKHNDQMKEEEESEVVLGDVDFLKNEKKDNLILPYDEKYTGVNNNNSSIIMSLKKCDKNITKKKGKDKNFNNIKYFKIDNNKSLWYENYMYWMNKISLYNNLFFTNMYYKENVIKCIDMNNLFLNKMNIYKCSICCMLYHCSNMDRNNFFIKNEDKMRKKTKKNDCLKLLYICNLCTIKYDYVLKIITYKENNKCWNEFYTDNYYKNNFYELVYFIIKIIYKNIYINNFFNIFCSIMDNIFKEHKTLNMKLLSLFLFSNKYFKYEEFYHFFNNKMKKDDRVFKKTFHMKNVCFMPRYSKKSIMYYIFSLFCNKIYNINKKKKCIHNKRSYIHNKQSYIHNKRTDVMYDNNVYFHLYELARKKLYDYSEKSQKPFDEIINMCLYLLYLYYLCNVLYKCVRINNVLKGDKDKGDILCDNKKMKYYKKRKNIKLFLNIINSNEYINVNKIFHGKCIYELPFYVNKERIKKKRNSVREFINNNDNNQENNADKKKDHHIYNQNYNHNSYLCDIGKVDESLHSKEDNKKDVIITNNASIDSTSPSINMNKSVVSSIYSYNSNKEKKKNMRKCIKGLHHTIKNKLNLYVKLMLDKYIQESSNYIKNENKDIKKTIESKNKDDKICLLCNFSNYIYKGRLIPFYDIYIHSECLKWSLNCTQCCYEENKNKTIVNNDNGTKVDVNLDNADDIINNNNMNMLDNNMNGPIKNNEENNNNNDNNNNNNNNNNNNNNNNNNNNNNNNNNNNNNNNNNNNNNNNNNNNNNKSKKNTQKKKDHVNDVKINQNNSNNKNNKKKKTSKDNEELKSDNTKNNKTKDSDGNNNDKTKLEKINLIHNKQSNEISCKIDNNNIINDISTNNPYMKEKKCKNKEKNRGSKNNNIKNIKLIDMCEWKEDRNFYNIYENMIEVDEDNVKEIIFDSIKSTCFLCGYNNASVYCSNEDCNVKFHLNCAFYSTVIKDPSNNPFFRYLKCFNLVEFNKDTIFYKNMYHDPNVNNSVSSHVCTDNRYYKEMIEKNYVDIFPVHIIYKIKKIWCNKCWNKKKIYNLFYIQKCFMSPYYYDNIKTEESVPNKITPMKKDKSDITNEVKEEKDDDILYDSKVHKEYFTLRNILMDDNLLNNIIRNKKSCSMEIQENNDKMKGDNNIDNEDVRNVLCDGEERVSYNRNKLNDILLKMDMKDILKYFIDFYFENGSYYILDNILYSVNHCVKIKYKKKSLYNIQDVLNKETKIGTMMRELEGLISKYVNRSNDNNYMDRKYDMLLLKNIKSDINNDNNNDINNNDNNNNENNNENINDNNNNNNNNNNNNNNNNSNNNNNNNYYYYHNNEGKYNEQGSYQHIDIQNIINDKSVENLIKGYFILKNFLHIGNNNITLQNEDLLILKKSENSFVHNLYDNDKVYNVHVPYVYTKKMNTSYMNKKENDKKYNKSVNKNSCKSKNSILDNINFDKNKNKITKKYTAFIIDNNEYTTDCSNEENNTSDDEENENRKNENDDDNIPEHIKMNNIMNSQQKKENDFKNINLYFQLTNVIKKVSINKLEGNFFNYEEKGNLLGSNVSKIKMNELLECNVGEENFCDDDQKFSDNKNYASDDEEKKKKKRKNQTRFYNYPKRISTTNNNKNVNVLVNSLNNNLINKKEYFLNIIMNENNDLYMKKINEKYFPNYHPKKRKKKKLDNTSYINHNYNYNYPYNYNLLSNNSKSRILKVGCHNILNIGDILKYDGDKIIYPCGYLNMRIFYNLPSYYLFQIYKNANIDDINRKTKLLEKIFLQLRATYIFSITLREQNFFFSILLFPLINIDYFSESDATNFILAEGYNINEVYMKFLSLFNSQNYICDDMNNDYSHYNAKYGNIYKCLETYILKSVEHNKFIDSHTFFGLTLPCVVYQIKYKLFKYMYKHLSEKIKTYIKKSKDSVMKKRIKGCTREVVYNDNVLCKYSNLDTTIFKENEKENEKNIRKTVKYKYNINSAMSYRYLMNISSNLRLYVKKSSIHGYGLYTCEFINEGEPVIEYIGEYIRNIISDKREKYYDKIESSCYMFRLNENIIIDATKWGNVSRFINHSCEPNCFCKIVSCDQNLKHIVIFAKRDIAAHEEITYDYQFGVESEGKKLICLCGSSTCLGRMN</sequence>
<keyword id="KW-0103">Bromodomain</keyword>
<keyword id="KW-0156">Chromatin regulator</keyword>
<keyword id="KW-0477">Merozoite</keyword>
<keyword id="KW-0479">Metal-binding</keyword>
<keyword id="KW-0489">Methyltransferase</keyword>
<keyword id="KW-1185">Reference proteome</keyword>
<keyword id="KW-0677">Repeat</keyword>
<keyword id="KW-0949">S-adenosyl-L-methionine</keyword>
<keyword id="KW-0804">Transcription</keyword>
<keyword id="KW-0805">Transcription regulation</keyword>
<keyword id="KW-0808">Transferase</keyword>
<keyword id="KW-0862">Zinc</keyword>
<keyword id="KW-0863">Zinc-finger</keyword>
<proteinExistence type="evidence at protein level"/>
<comment type="function">
    <text evidence="1">Probable histone methyltransferase.</text>
</comment>
<comment type="catalytic activity">
    <reaction>
        <text>L-lysyl-[histone] + S-adenosyl-L-methionine = N(6)-methyl-L-lysyl-[histone] + S-adenosyl-L-homocysteine + H(+)</text>
        <dbReference type="Rhea" id="RHEA:10024"/>
        <dbReference type="Rhea" id="RHEA-COMP:9845"/>
        <dbReference type="Rhea" id="RHEA-COMP:9846"/>
        <dbReference type="ChEBI" id="CHEBI:15378"/>
        <dbReference type="ChEBI" id="CHEBI:29969"/>
        <dbReference type="ChEBI" id="CHEBI:57856"/>
        <dbReference type="ChEBI" id="CHEBI:59789"/>
        <dbReference type="ChEBI" id="CHEBI:61929"/>
    </reaction>
</comment>
<comment type="developmental stage">
    <text evidence="10">constitutive pattern of expression.</text>
</comment>
<comment type="biotechnology">
    <text evidence="9">Possible candidate for an effective malaria vaccine as determined by epitope response in sera.</text>
</comment>
<comment type="similarity">
    <text evidence="6">Belongs to the class V-like SAM-binding methyltransferase superfamily.</text>
</comment>
<feature type="chain" id="PRO_0000388753" description="Putative histone-lysine N-methyltransferase 1">
    <location>
        <begin position="1"/>
        <end position="6753"/>
    </location>
</feature>
<feature type="domain" description="Bromo" evidence="3">
    <location>
        <begin position="1816"/>
        <end position="1919"/>
    </location>
</feature>
<feature type="domain" description="SET" evidence="6">
    <location>
        <begin position="6612"/>
        <end position="6729"/>
    </location>
</feature>
<feature type="domain" description="Post-SET" evidence="5">
    <location>
        <begin position="6737"/>
        <end position="6753"/>
    </location>
</feature>
<feature type="zinc finger region" description="PHD-type 1" evidence="4">
    <location>
        <begin position="1671"/>
        <end position="1728"/>
    </location>
</feature>
<feature type="zinc finger region" description="PHD-type 2" evidence="4">
    <location>
        <begin position="1761"/>
        <end position="1819"/>
    </location>
</feature>
<feature type="zinc finger region" description="RING-type; degenerate" evidence="2">
    <location>
        <begin position="1764"/>
        <end position="1817"/>
    </location>
</feature>
<feature type="zinc finger region" description="PHD-type 3" evidence="4">
    <location>
        <begin position="2510"/>
        <end position="2579"/>
    </location>
</feature>
<feature type="zinc finger region" description="C2HC pre-PHD-type; degenerate" evidence="7">
    <location>
        <begin position="5496"/>
        <end position="5532"/>
    </location>
</feature>
<feature type="zinc finger region" description="PHD-type 4; degenerate" evidence="7">
    <location>
        <begin position="5558"/>
        <end position="5610"/>
    </location>
</feature>
<feature type="region of interest" description="Disordered" evidence="8">
    <location>
        <begin position="1"/>
        <end position="28"/>
    </location>
</feature>
<feature type="region of interest" description="Disordered" evidence="8">
    <location>
        <begin position="418"/>
        <end position="458"/>
    </location>
</feature>
<feature type="region of interest" description="Disordered" evidence="8">
    <location>
        <begin position="470"/>
        <end position="522"/>
    </location>
</feature>
<feature type="region of interest" description="Disordered" evidence="8">
    <location>
        <begin position="736"/>
        <end position="1024"/>
    </location>
</feature>
<feature type="region of interest" description="Disordered" evidence="8">
    <location>
        <begin position="1487"/>
        <end position="1545"/>
    </location>
</feature>
<feature type="region of interest" description="Disordered" evidence="8">
    <location>
        <begin position="1557"/>
        <end position="1642"/>
    </location>
</feature>
<feature type="region of interest" description="Disordered" evidence="8">
    <location>
        <begin position="2694"/>
        <end position="2768"/>
    </location>
</feature>
<feature type="region of interest" description="Disordered" evidence="8">
    <location>
        <begin position="3053"/>
        <end position="3072"/>
    </location>
</feature>
<feature type="region of interest" description="Disordered" evidence="8">
    <location>
        <begin position="4182"/>
        <end position="4254"/>
    </location>
</feature>
<feature type="region of interest" description="Disordered" evidence="8">
    <location>
        <begin position="4295"/>
        <end position="4349"/>
    </location>
</feature>
<feature type="region of interest" description="Disordered" evidence="8">
    <location>
        <begin position="5331"/>
        <end position="5460"/>
    </location>
</feature>
<feature type="region of interest" description="Disordered" evidence="8">
    <location>
        <begin position="5905"/>
        <end position="5958"/>
    </location>
</feature>
<feature type="region of interest" description="Disordered" evidence="8">
    <location>
        <begin position="6103"/>
        <end position="6133"/>
    </location>
</feature>
<feature type="region of interest" description="Disordered" evidence="8">
    <location>
        <begin position="6212"/>
        <end position="6235"/>
    </location>
</feature>
<feature type="compositionally biased region" description="Low complexity" evidence="8">
    <location>
        <begin position="435"/>
        <end position="449"/>
    </location>
</feature>
<feature type="compositionally biased region" description="Basic and acidic residues" evidence="8">
    <location>
        <begin position="475"/>
        <end position="502"/>
    </location>
</feature>
<feature type="compositionally biased region" description="Basic residues" evidence="8">
    <location>
        <begin position="504"/>
        <end position="516"/>
    </location>
</feature>
<feature type="compositionally biased region" description="Basic and acidic residues" evidence="8">
    <location>
        <begin position="739"/>
        <end position="794"/>
    </location>
</feature>
<feature type="compositionally biased region" description="Acidic residues" evidence="8">
    <location>
        <begin position="798"/>
        <end position="808"/>
    </location>
</feature>
<feature type="compositionally biased region" description="Low complexity" evidence="8">
    <location>
        <begin position="809"/>
        <end position="833"/>
    </location>
</feature>
<feature type="compositionally biased region" description="Basic and acidic residues" evidence="8">
    <location>
        <begin position="853"/>
        <end position="866"/>
    </location>
</feature>
<feature type="compositionally biased region" description="Basic and acidic residues" evidence="8">
    <location>
        <begin position="885"/>
        <end position="900"/>
    </location>
</feature>
<feature type="compositionally biased region" description="Low complexity" evidence="8">
    <location>
        <begin position="912"/>
        <end position="932"/>
    </location>
</feature>
<feature type="compositionally biased region" description="Basic and acidic residues" evidence="8">
    <location>
        <begin position="945"/>
        <end position="955"/>
    </location>
</feature>
<feature type="compositionally biased region" description="Basic and acidic residues" evidence="8">
    <location>
        <begin position="964"/>
        <end position="975"/>
    </location>
</feature>
<feature type="compositionally biased region" description="Basic residues" evidence="8">
    <location>
        <begin position="1002"/>
        <end position="1019"/>
    </location>
</feature>
<feature type="compositionally biased region" description="Basic residues" evidence="8">
    <location>
        <begin position="1492"/>
        <end position="1506"/>
    </location>
</feature>
<feature type="compositionally biased region" description="Low complexity" evidence="8">
    <location>
        <begin position="1522"/>
        <end position="1533"/>
    </location>
</feature>
<feature type="compositionally biased region" description="Basic and acidic residues" evidence="8">
    <location>
        <begin position="1566"/>
        <end position="1599"/>
    </location>
</feature>
<feature type="compositionally biased region" description="Low complexity" evidence="8">
    <location>
        <begin position="1615"/>
        <end position="1632"/>
    </location>
</feature>
<feature type="compositionally biased region" description="Basic and acidic residues" evidence="8">
    <location>
        <begin position="2694"/>
        <end position="2705"/>
    </location>
</feature>
<feature type="compositionally biased region" description="Low complexity" evidence="8">
    <location>
        <begin position="2720"/>
        <end position="2735"/>
    </location>
</feature>
<feature type="compositionally biased region" description="Basic and acidic residues" evidence="8">
    <location>
        <begin position="2758"/>
        <end position="2768"/>
    </location>
</feature>
<feature type="compositionally biased region" description="Low complexity" evidence="8">
    <location>
        <begin position="3057"/>
        <end position="3072"/>
    </location>
</feature>
<feature type="compositionally biased region" description="Basic and acidic residues" evidence="8">
    <location>
        <begin position="4212"/>
        <end position="4223"/>
    </location>
</feature>
<feature type="compositionally biased region" description="Basic and acidic residues" evidence="8">
    <location>
        <begin position="4239"/>
        <end position="4254"/>
    </location>
</feature>
<feature type="compositionally biased region" description="Basic and acidic residues" evidence="8">
    <location>
        <begin position="4297"/>
        <end position="4321"/>
    </location>
</feature>
<feature type="compositionally biased region" description="Basic residues" evidence="8">
    <location>
        <begin position="4322"/>
        <end position="4338"/>
    </location>
</feature>
<feature type="compositionally biased region" description="Low complexity" evidence="8">
    <location>
        <begin position="5331"/>
        <end position="5340"/>
    </location>
</feature>
<feature type="compositionally biased region" description="Low complexity" evidence="8">
    <location>
        <begin position="5348"/>
        <end position="5400"/>
    </location>
</feature>
<feature type="compositionally biased region" description="Basic residues" evidence="8">
    <location>
        <begin position="5401"/>
        <end position="5411"/>
    </location>
</feature>
<feature type="compositionally biased region" description="Low complexity" evidence="8">
    <location>
        <begin position="5416"/>
        <end position="5426"/>
    </location>
</feature>
<feature type="compositionally biased region" description="Basic and acidic residues" evidence="8">
    <location>
        <begin position="5434"/>
        <end position="5460"/>
    </location>
</feature>
<feature type="compositionally biased region" description="Low complexity" evidence="8">
    <location>
        <begin position="5905"/>
        <end position="5952"/>
    </location>
</feature>
<feature type="compositionally biased region" description="Basic and acidic residues" evidence="8">
    <location>
        <begin position="6118"/>
        <end position="6133"/>
    </location>
</feature>
<evidence type="ECO:0000250" key="1"/>
<evidence type="ECO:0000255" key="2"/>
<evidence type="ECO:0000255" key="3">
    <source>
        <dbReference type="PROSITE-ProRule" id="PRU00035"/>
    </source>
</evidence>
<evidence type="ECO:0000255" key="4">
    <source>
        <dbReference type="PROSITE-ProRule" id="PRU00146"/>
    </source>
</evidence>
<evidence type="ECO:0000255" key="5">
    <source>
        <dbReference type="PROSITE-ProRule" id="PRU00155"/>
    </source>
</evidence>
<evidence type="ECO:0000255" key="6">
    <source>
        <dbReference type="PROSITE-ProRule" id="PRU00190"/>
    </source>
</evidence>
<evidence type="ECO:0000255" key="7">
    <source>
        <dbReference type="PROSITE-ProRule" id="PRU01146"/>
    </source>
</evidence>
<evidence type="ECO:0000256" key="8">
    <source>
        <dbReference type="SAM" id="MobiDB-lite"/>
    </source>
</evidence>
<evidence type="ECO:0000269" key="9">
    <source>
    </source>
</evidence>
<evidence type="ECO:0000269" key="10">
    <source>
    </source>
</evidence>
<evidence type="ECO:0000305" key="11"/>
<evidence type="ECO:0000312" key="12">
    <source>
        <dbReference type="EMBL" id="CAG25109.2"/>
    </source>
</evidence>
<protein>
    <recommendedName>
        <fullName>Putative histone-lysine N-methyltransferase 1</fullName>
        <shortName>PfSET1</shortName>
        <ecNumber>2.1.1.-</ecNumber>
    </recommendedName>
</protein>
<name>SET1_PLAF7</name>